<protein>
    <recommendedName>
        <fullName>Histidine ammonia-lyase 1</fullName>
        <shortName>Histidase 1</shortName>
        <ecNumber>4.3.1.3</ecNumber>
    </recommendedName>
</protein>
<sequence length="516" mass="55978">MEVFILELVLGSKNITLEDLINVTRKGYKVSISEEAYEKIDKARALVDKYVEEGKVSYGITTGFGKFAEVSISKEQTGQLQKNIVMSHSCNVGNPLPIDIAKGIVLLRAVNLAKGYSGARRIVIEKLVELLNKDVTPWIPEKGSVGSSGDLSPLAHMSLVLIGLGKAYYKGELLEAKDALAKADIEPIPALSSKEGLALTNGTQALTSTGAHVLYDAINLSKHLDIAASLTMEGLHGIIDAYDPRIGEVRGHLGQINTAKNMRNILAGSKNVTKQGVERVQDSYVLRCIPQIHGASKDTLEYVKQKVELELNAVTDNPIIFVDTDEVISGGNFHGQPMALPFDFLGIALSEMANVSERRIEKMVNPAINNGLPAFLVEKGGLNSGFMIVQYSAASLVSENKVLAHPASVDSIPTSANQEDHVSMGSVAAKKSKDIFENVRKVIGMELITACQAIDLKEAKDKLSPATKVAYDEVRKIISYVSEDRPMYIDIHAAEDLIKTNKIVENVEKAIGKLEF</sequence>
<comment type="catalytic activity">
    <reaction>
        <text>L-histidine = trans-urocanate + NH4(+)</text>
        <dbReference type="Rhea" id="RHEA:21232"/>
        <dbReference type="ChEBI" id="CHEBI:17771"/>
        <dbReference type="ChEBI" id="CHEBI:28938"/>
        <dbReference type="ChEBI" id="CHEBI:57595"/>
        <dbReference type="EC" id="4.3.1.3"/>
    </reaction>
</comment>
<comment type="pathway">
    <text>Amino-acid degradation; L-histidine degradation into L-glutamate; N-formimidoyl-L-glutamate from L-histidine: step 1/3.</text>
</comment>
<comment type="subcellular location">
    <subcellularLocation>
        <location evidence="2">Cytoplasm</location>
    </subcellularLocation>
</comment>
<comment type="PTM">
    <text evidence="1">Contains an active site 4-methylidene-imidazol-5-one (MIO), which is formed autocatalytically by cyclization and dehydration of residues Ser-Ser-Gly.</text>
</comment>
<comment type="similarity">
    <text evidence="2">Belongs to the PAL/histidase family.</text>
</comment>
<dbReference type="EC" id="4.3.1.3"/>
<dbReference type="EMBL" id="AE009951">
    <property type="protein sequence ID" value="AAL94987.1"/>
    <property type="molecule type" value="Genomic_DNA"/>
</dbReference>
<dbReference type="RefSeq" id="NP_603688.1">
    <property type="nucleotide sequence ID" value="NC_003454.1"/>
</dbReference>
<dbReference type="RefSeq" id="WP_011016650.1">
    <property type="nucleotide sequence ID" value="NZ_CP028101.1"/>
</dbReference>
<dbReference type="SMR" id="Q8RFC2"/>
<dbReference type="FunCoup" id="Q8RFC2">
    <property type="interactions" value="38"/>
</dbReference>
<dbReference type="STRING" id="190304.FN0791"/>
<dbReference type="PaxDb" id="190304-FN0791"/>
<dbReference type="EnsemblBacteria" id="AAL94987">
    <property type="protein sequence ID" value="AAL94987"/>
    <property type="gene ID" value="FN0791"/>
</dbReference>
<dbReference type="GeneID" id="79783781"/>
<dbReference type="KEGG" id="fnu:FN0791"/>
<dbReference type="PATRIC" id="fig|190304.8.peg.1354"/>
<dbReference type="eggNOG" id="COG2986">
    <property type="taxonomic scope" value="Bacteria"/>
</dbReference>
<dbReference type="HOGENOM" id="CLU_014801_4_0_0"/>
<dbReference type="InParanoid" id="Q8RFC2"/>
<dbReference type="BioCyc" id="FNUC190304:G1FZS-1376-MONOMER"/>
<dbReference type="UniPathway" id="UPA00379">
    <property type="reaction ID" value="UER00549"/>
</dbReference>
<dbReference type="Proteomes" id="UP000002521">
    <property type="component" value="Chromosome"/>
</dbReference>
<dbReference type="GO" id="GO:0005737">
    <property type="term" value="C:cytoplasm"/>
    <property type="evidence" value="ECO:0007669"/>
    <property type="project" value="UniProtKB-SubCell"/>
</dbReference>
<dbReference type="GO" id="GO:0004397">
    <property type="term" value="F:histidine ammonia-lyase activity"/>
    <property type="evidence" value="ECO:0000318"/>
    <property type="project" value="GO_Central"/>
</dbReference>
<dbReference type="GO" id="GO:0006548">
    <property type="term" value="P:L-histidine catabolic process"/>
    <property type="evidence" value="ECO:0000318"/>
    <property type="project" value="GO_Central"/>
</dbReference>
<dbReference type="GO" id="GO:0019556">
    <property type="term" value="P:L-histidine catabolic process to glutamate and formamide"/>
    <property type="evidence" value="ECO:0007669"/>
    <property type="project" value="UniProtKB-UniPathway"/>
</dbReference>
<dbReference type="GO" id="GO:0019557">
    <property type="term" value="P:L-histidine catabolic process to glutamate and formate"/>
    <property type="evidence" value="ECO:0007669"/>
    <property type="project" value="UniProtKB-UniPathway"/>
</dbReference>
<dbReference type="CDD" id="cd00332">
    <property type="entry name" value="PAL-HAL"/>
    <property type="match status" value="1"/>
</dbReference>
<dbReference type="FunFam" id="1.10.275.10:FF:000005">
    <property type="entry name" value="Histidine ammonia-lyase"/>
    <property type="match status" value="1"/>
</dbReference>
<dbReference type="FunFam" id="1.20.200.10:FF:000003">
    <property type="entry name" value="Histidine ammonia-lyase"/>
    <property type="match status" value="1"/>
</dbReference>
<dbReference type="Gene3D" id="1.20.200.10">
    <property type="entry name" value="Fumarase/aspartase (Central domain)"/>
    <property type="match status" value="1"/>
</dbReference>
<dbReference type="Gene3D" id="1.10.275.10">
    <property type="entry name" value="Fumarase/aspartase (N-terminal domain)"/>
    <property type="match status" value="1"/>
</dbReference>
<dbReference type="HAMAP" id="MF_00229">
    <property type="entry name" value="His_ammonia_lyase"/>
    <property type="match status" value="1"/>
</dbReference>
<dbReference type="InterPro" id="IPR001106">
    <property type="entry name" value="Aromatic_Lyase"/>
</dbReference>
<dbReference type="InterPro" id="IPR024083">
    <property type="entry name" value="Fumarase/histidase_N"/>
</dbReference>
<dbReference type="InterPro" id="IPR005921">
    <property type="entry name" value="HutH"/>
</dbReference>
<dbReference type="InterPro" id="IPR008948">
    <property type="entry name" value="L-Aspartase-like"/>
</dbReference>
<dbReference type="InterPro" id="IPR022313">
    <property type="entry name" value="Phe/His_NH3-lyase_AS"/>
</dbReference>
<dbReference type="NCBIfam" id="TIGR01225">
    <property type="entry name" value="hutH"/>
    <property type="match status" value="1"/>
</dbReference>
<dbReference type="NCBIfam" id="NF006871">
    <property type="entry name" value="PRK09367.1"/>
    <property type="match status" value="1"/>
</dbReference>
<dbReference type="PANTHER" id="PTHR10362">
    <property type="entry name" value="HISTIDINE AMMONIA-LYASE"/>
    <property type="match status" value="1"/>
</dbReference>
<dbReference type="Pfam" id="PF00221">
    <property type="entry name" value="Lyase_aromatic"/>
    <property type="match status" value="1"/>
</dbReference>
<dbReference type="SUPFAM" id="SSF48557">
    <property type="entry name" value="L-aspartase-like"/>
    <property type="match status" value="1"/>
</dbReference>
<dbReference type="PROSITE" id="PS00488">
    <property type="entry name" value="PAL_HISTIDASE"/>
    <property type="match status" value="1"/>
</dbReference>
<evidence type="ECO:0000250" key="1"/>
<evidence type="ECO:0000305" key="2"/>
<name>HUTH1_FUSNN</name>
<accession>Q8RFC2</accession>
<organism>
    <name type="scientific">Fusobacterium nucleatum subsp. nucleatum (strain ATCC 25586 / DSM 15643 / BCRC 10681 / CIP 101130 / JCM 8532 / KCTC 2640 / LMG 13131 / VPI 4355)</name>
    <dbReference type="NCBI Taxonomy" id="190304"/>
    <lineage>
        <taxon>Bacteria</taxon>
        <taxon>Fusobacteriati</taxon>
        <taxon>Fusobacteriota</taxon>
        <taxon>Fusobacteriia</taxon>
        <taxon>Fusobacteriales</taxon>
        <taxon>Fusobacteriaceae</taxon>
        <taxon>Fusobacterium</taxon>
    </lineage>
</organism>
<gene>
    <name type="primary">hutH1</name>
    <name type="ordered locus">FN0791</name>
</gene>
<feature type="chain" id="PRO_0000161004" description="Histidine ammonia-lyase 1">
    <location>
        <begin position="1"/>
        <end position="516"/>
    </location>
</feature>
<feature type="modified residue" description="2,3-didehydroalanine (Ser)" evidence="1">
    <location>
        <position position="148"/>
    </location>
</feature>
<feature type="cross-link" description="5-imidazolinone (Ser-Gly)" evidence="1">
    <location>
        <begin position="147"/>
        <end position="149"/>
    </location>
</feature>
<proteinExistence type="inferred from homology"/>
<keyword id="KW-0963">Cytoplasm</keyword>
<keyword id="KW-0369">Histidine metabolism</keyword>
<keyword id="KW-0456">Lyase</keyword>
<keyword id="KW-1185">Reference proteome</keyword>
<reference key="1">
    <citation type="journal article" date="2002" name="J. Bacteriol.">
        <title>Genome sequence and analysis of the oral bacterium Fusobacterium nucleatum strain ATCC 25586.</title>
        <authorList>
            <person name="Kapatral V."/>
            <person name="Anderson I."/>
            <person name="Ivanova N."/>
            <person name="Reznik G."/>
            <person name="Los T."/>
            <person name="Lykidis A."/>
            <person name="Bhattacharyya A."/>
            <person name="Bartman A."/>
            <person name="Gardner W."/>
            <person name="Grechkin G."/>
            <person name="Zhu L."/>
            <person name="Vasieva O."/>
            <person name="Chu L."/>
            <person name="Kogan Y."/>
            <person name="Chaga O."/>
            <person name="Goltsman E."/>
            <person name="Bernal A."/>
            <person name="Larsen N."/>
            <person name="D'Souza M."/>
            <person name="Walunas T."/>
            <person name="Pusch G."/>
            <person name="Haselkorn R."/>
            <person name="Fonstein M."/>
            <person name="Kyrpides N.C."/>
            <person name="Overbeek R."/>
        </authorList>
    </citation>
    <scope>NUCLEOTIDE SEQUENCE [LARGE SCALE GENOMIC DNA]</scope>
    <source>
        <strain>ATCC 25586 / DSM 15643 / BCRC 10681 / CIP 101130 / JCM 8532 / KCTC 2640 / LMG 13131 / VPI 4355</strain>
    </source>
</reference>